<name>NQRB_HAEIN</name>
<dbReference type="EC" id="7.2.1.1" evidence="1"/>
<dbReference type="EMBL" id="L42023">
    <property type="protein sequence ID" value="AAC21837.1"/>
    <property type="molecule type" value="Genomic_DNA"/>
</dbReference>
<dbReference type="PIR" id="C64052">
    <property type="entry name" value="C64052"/>
</dbReference>
<dbReference type="RefSeq" id="NP_438335.1">
    <property type="nucleotide sequence ID" value="NC_000907.1"/>
</dbReference>
<dbReference type="SMR" id="O05011"/>
<dbReference type="STRING" id="71421.HI_0166"/>
<dbReference type="EnsemblBacteria" id="AAC21837">
    <property type="protein sequence ID" value="AAC21837"/>
    <property type="gene ID" value="HI_0166"/>
</dbReference>
<dbReference type="KEGG" id="hin:HI_0166"/>
<dbReference type="PATRIC" id="fig|71421.8.peg.171"/>
<dbReference type="eggNOG" id="COG1805">
    <property type="taxonomic scope" value="Bacteria"/>
</dbReference>
<dbReference type="HOGENOM" id="CLU_042020_1_1_6"/>
<dbReference type="OrthoDB" id="9776359at2"/>
<dbReference type="PhylomeDB" id="O05011"/>
<dbReference type="BioCyc" id="HINF71421:G1GJ1-177-MONOMER"/>
<dbReference type="Proteomes" id="UP000000579">
    <property type="component" value="Chromosome"/>
</dbReference>
<dbReference type="GO" id="GO:0005886">
    <property type="term" value="C:plasma membrane"/>
    <property type="evidence" value="ECO:0000318"/>
    <property type="project" value="GO_Central"/>
</dbReference>
<dbReference type="GO" id="GO:0010181">
    <property type="term" value="F:FMN binding"/>
    <property type="evidence" value="ECO:0007669"/>
    <property type="project" value="InterPro"/>
</dbReference>
<dbReference type="GO" id="GO:0016655">
    <property type="term" value="F:oxidoreductase activity, acting on NAD(P)H, quinone or similar compound as acceptor"/>
    <property type="evidence" value="ECO:0007669"/>
    <property type="project" value="UniProtKB-UniRule"/>
</dbReference>
<dbReference type="GO" id="GO:0022904">
    <property type="term" value="P:respiratory electron transport chain"/>
    <property type="evidence" value="ECO:0007669"/>
    <property type="project" value="InterPro"/>
</dbReference>
<dbReference type="GO" id="GO:0006814">
    <property type="term" value="P:sodium ion transport"/>
    <property type="evidence" value="ECO:0007669"/>
    <property type="project" value="UniProtKB-UniRule"/>
</dbReference>
<dbReference type="GO" id="GO:0055085">
    <property type="term" value="P:transmembrane transport"/>
    <property type="evidence" value="ECO:0007669"/>
    <property type="project" value="InterPro"/>
</dbReference>
<dbReference type="HAMAP" id="MF_00426">
    <property type="entry name" value="NqrB"/>
    <property type="match status" value="1"/>
</dbReference>
<dbReference type="InterPro" id="IPR010966">
    <property type="entry name" value="NqrB"/>
</dbReference>
<dbReference type="InterPro" id="IPR004338">
    <property type="entry name" value="NqrB/RnfD"/>
</dbReference>
<dbReference type="NCBIfam" id="TIGR01937">
    <property type="entry name" value="nqrB"/>
    <property type="match status" value="1"/>
</dbReference>
<dbReference type="NCBIfam" id="NF003756">
    <property type="entry name" value="PRK05349.1"/>
    <property type="match status" value="1"/>
</dbReference>
<dbReference type="PANTHER" id="PTHR30578">
    <property type="entry name" value="ELECTRON TRANSPORT COMPLEX PROTEIN RNFD"/>
    <property type="match status" value="1"/>
</dbReference>
<dbReference type="PANTHER" id="PTHR30578:SF1">
    <property type="entry name" value="NA(+)-TRANSLOCATING NADH-QUINONE REDUCTASE SUBUNIT B"/>
    <property type="match status" value="1"/>
</dbReference>
<dbReference type="Pfam" id="PF03116">
    <property type="entry name" value="NQR2_RnfD_RnfE"/>
    <property type="match status" value="1"/>
</dbReference>
<dbReference type="PIRSF" id="PIRSF016055">
    <property type="entry name" value="NADH-UbQ_OxRdtase_B_su"/>
    <property type="match status" value="1"/>
</dbReference>
<reference key="1">
    <citation type="journal article" date="1995" name="Science">
        <title>Whole-genome random sequencing and assembly of Haemophilus influenzae Rd.</title>
        <authorList>
            <person name="Fleischmann R.D."/>
            <person name="Adams M.D."/>
            <person name="White O."/>
            <person name="Clayton R.A."/>
            <person name="Kirkness E.F."/>
            <person name="Kerlavage A.R."/>
            <person name="Bult C.J."/>
            <person name="Tomb J.-F."/>
            <person name="Dougherty B.A."/>
            <person name="Merrick J.M."/>
            <person name="McKenney K."/>
            <person name="Sutton G.G."/>
            <person name="FitzHugh W."/>
            <person name="Fields C.A."/>
            <person name="Gocayne J.D."/>
            <person name="Scott J.D."/>
            <person name="Shirley R."/>
            <person name="Liu L.-I."/>
            <person name="Glodek A."/>
            <person name="Kelley J.M."/>
            <person name="Weidman J.F."/>
            <person name="Phillips C.A."/>
            <person name="Spriggs T."/>
            <person name="Hedblom E."/>
            <person name="Cotton M.D."/>
            <person name="Utterback T.R."/>
            <person name="Hanna M.C."/>
            <person name="Nguyen D.T."/>
            <person name="Saudek D.M."/>
            <person name="Brandon R.C."/>
            <person name="Fine L.D."/>
            <person name="Fritchman J.L."/>
            <person name="Fuhrmann J.L."/>
            <person name="Geoghagen N.S.M."/>
            <person name="Gnehm C.L."/>
            <person name="McDonald L.A."/>
            <person name="Small K.V."/>
            <person name="Fraser C.M."/>
            <person name="Smith H.O."/>
            <person name="Venter J.C."/>
        </authorList>
    </citation>
    <scope>NUCLEOTIDE SEQUENCE [LARGE SCALE GENOMIC DNA]</scope>
    <source>
        <strain>ATCC 51907 / DSM 11121 / KW20 / Rd</strain>
    </source>
</reference>
<reference key="2">
    <citation type="journal article" date="1996" name="FEBS Lett.">
        <title>Existence of Na+-translocating NADH-quinone reductase in Haemophilus influenzae.</title>
        <authorList>
            <person name="Hayashi M."/>
            <person name="Nakayama Y."/>
            <person name="Unemoto T."/>
        </authorList>
    </citation>
    <scope>IDENTIFICATION AS NQR SYSTEM</scope>
    <source>
        <strain>ATCC 51907 / DSM 11121 / KW20 / Rd</strain>
    </source>
</reference>
<organism>
    <name type="scientific">Haemophilus influenzae (strain ATCC 51907 / DSM 11121 / KW20 / Rd)</name>
    <dbReference type="NCBI Taxonomy" id="71421"/>
    <lineage>
        <taxon>Bacteria</taxon>
        <taxon>Pseudomonadati</taxon>
        <taxon>Pseudomonadota</taxon>
        <taxon>Gammaproteobacteria</taxon>
        <taxon>Pasteurellales</taxon>
        <taxon>Pasteurellaceae</taxon>
        <taxon>Haemophilus</taxon>
    </lineage>
</organism>
<evidence type="ECO:0000255" key="1">
    <source>
        <dbReference type="HAMAP-Rule" id="MF_00426"/>
    </source>
</evidence>
<protein>
    <recommendedName>
        <fullName evidence="1">Na(+)-translocating NADH-quinone reductase subunit B</fullName>
        <shortName evidence="1">Na(+)-NQR subunit B</shortName>
        <shortName evidence="1">Na(+)-translocating NQR subunit B</shortName>
        <ecNumber evidence="1">7.2.1.1</ecNumber>
    </recommendedName>
    <alternativeName>
        <fullName evidence="1">NQR complex subunit B</fullName>
    </alternativeName>
    <alternativeName>
        <fullName evidence="1">NQR-1 subunit B</fullName>
    </alternativeName>
</protein>
<comment type="function">
    <text evidence="1">NQR complex catalyzes the reduction of ubiquinone-1 to ubiquinol by two successive reactions, coupled with the transport of Na(+) ions from the cytoplasm to the periplasm. NqrA to NqrE are probably involved in the second step, the conversion of ubisemiquinone to ubiquinol.</text>
</comment>
<comment type="catalytic activity">
    <reaction evidence="1">
        <text>a ubiquinone + n Na(+)(in) + NADH + H(+) = a ubiquinol + n Na(+)(out) + NAD(+)</text>
        <dbReference type="Rhea" id="RHEA:47748"/>
        <dbReference type="Rhea" id="RHEA-COMP:9565"/>
        <dbReference type="Rhea" id="RHEA-COMP:9566"/>
        <dbReference type="ChEBI" id="CHEBI:15378"/>
        <dbReference type="ChEBI" id="CHEBI:16389"/>
        <dbReference type="ChEBI" id="CHEBI:17976"/>
        <dbReference type="ChEBI" id="CHEBI:29101"/>
        <dbReference type="ChEBI" id="CHEBI:57540"/>
        <dbReference type="ChEBI" id="CHEBI:57945"/>
        <dbReference type="EC" id="7.2.1.1"/>
    </reaction>
</comment>
<comment type="cofactor">
    <cofactor evidence="1">
        <name>FMN</name>
        <dbReference type="ChEBI" id="CHEBI:58210"/>
    </cofactor>
</comment>
<comment type="subunit">
    <text evidence="1">Composed of six subunits; NqrA, NqrB, NqrC, NqrD, NqrE and NqrF.</text>
</comment>
<comment type="subcellular location">
    <subcellularLocation>
        <location evidence="1">Cell inner membrane</location>
        <topology evidence="1">Multi-pass membrane protein</topology>
    </subcellularLocation>
</comment>
<comment type="similarity">
    <text evidence="1">Belongs to the NqrB/RnfD family.</text>
</comment>
<feature type="chain" id="PRO_0000074437" description="Na(+)-translocating NADH-quinone reductase subunit B">
    <location>
        <begin position="1"/>
        <end position="411"/>
    </location>
</feature>
<feature type="transmembrane region" description="Helical" evidence="1">
    <location>
        <begin position="56"/>
        <end position="76"/>
    </location>
</feature>
<feature type="transmembrane region" description="Helical" evidence="1">
    <location>
        <begin position="120"/>
        <end position="140"/>
    </location>
</feature>
<feature type="transmembrane region" description="Helical" evidence="1">
    <location>
        <begin position="166"/>
        <end position="186"/>
    </location>
</feature>
<feature type="transmembrane region" description="Helical" evidence="1">
    <location>
        <begin position="272"/>
        <end position="292"/>
    </location>
</feature>
<feature type="transmembrane region" description="Helical" evidence="1">
    <location>
        <begin position="294"/>
        <end position="314"/>
    </location>
</feature>
<feature type="transmembrane region" description="Helical" evidence="1">
    <location>
        <begin position="319"/>
        <end position="339"/>
    </location>
</feature>
<feature type="transmembrane region" description="Helical" evidence="1">
    <location>
        <begin position="348"/>
        <end position="368"/>
    </location>
</feature>
<feature type="transmembrane region" description="Helical" evidence="1">
    <location>
        <begin position="378"/>
        <end position="398"/>
    </location>
</feature>
<feature type="modified residue" description="FMN phosphoryl threonine" evidence="1">
    <location>
        <position position="233"/>
    </location>
</feature>
<keyword id="KW-0997">Cell inner membrane</keyword>
<keyword id="KW-1003">Cell membrane</keyword>
<keyword id="KW-0285">Flavoprotein</keyword>
<keyword id="KW-0288">FMN</keyword>
<keyword id="KW-0406">Ion transport</keyword>
<keyword id="KW-0472">Membrane</keyword>
<keyword id="KW-0520">NAD</keyword>
<keyword id="KW-0597">Phosphoprotein</keyword>
<keyword id="KW-1185">Reference proteome</keyword>
<keyword id="KW-0915">Sodium</keyword>
<keyword id="KW-0739">Sodium transport</keyword>
<keyword id="KW-1278">Translocase</keyword>
<keyword id="KW-0812">Transmembrane</keyword>
<keyword id="KW-1133">Transmembrane helix</keyword>
<keyword id="KW-0813">Transport</keyword>
<keyword id="KW-0830">Ubiquinone</keyword>
<sequence length="411" mass="44729">MGLKNLFEKMEPAFLPGGKYSKLYPIFESIYTLLYTPGTVTHKNTHVRDALDSKRMMITVFLALFPAIFYGMYNVGNQAIPALNQLGNLDQLIANDWHYALASSLGLDLTANATWGSKMALGAIFFLPIYLVVFTVCTIWELLFSVVRGHEVNEGMFVSTILFALIVPPTLPLWQAALGITFGIIVAKEIFGGVGRNFMNPALAGRAFLFFAYPAQISGDTVWTAADGFSGATALSQWSQGGQGALQHTVTGAPITWMDAFVGNLPGSMGEVSTLAILIGGAVIVFTRIAAWRIIAGVMIGMIATSTLFNLIGSETNPMFSMPWHWHFVLGGFALGMVFMATDPVSASFTNTGKWWYGALIGVMAVLIRTVNPAYPEGMMLAILFANLFAPIFDYIVVQANIKRRRARTNG</sequence>
<accession>O05011</accession>
<proteinExistence type="inferred from homology"/>
<gene>
    <name evidence="1" type="primary">nqrB</name>
    <name type="ordered locus">HI_0166</name>
</gene>